<reference key="1">
    <citation type="submission" date="2008-08" db="EMBL/GenBank/DDBJ databases">
        <title>The complete genome sequence of Thermodesulfovibrio yellowstonii strain ATCC 51303 / DSM 11347 / YP87.</title>
        <authorList>
            <person name="Dodson R.J."/>
            <person name="Durkin A.S."/>
            <person name="Wu M."/>
            <person name="Eisen J."/>
            <person name="Sutton G."/>
        </authorList>
    </citation>
    <scope>NUCLEOTIDE SEQUENCE [LARGE SCALE GENOMIC DNA]</scope>
    <source>
        <strain>ATCC 51303 / DSM 11347 / YP87</strain>
    </source>
</reference>
<comment type="catalytic activity">
    <reaction evidence="1">
        <text>1-(5-phospho-beta-D-ribosyl)-5-[(5-phospho-beta-D-ribosylamino)methylideneamino]imidazole-4-carboxamide = 5-[(5-phospho-1-deoxy-D-ribulos-1-ylimino)methylamino]-1-(5-phospho-beta-D-ribosyl)imidazole-4-carboxamide</text>
        <dbReference type="Rhea" id="RHEA:15469"/>
        <dbReference type="ChEBI" id="CHEBI:58435"/>
        <dbReference type="ChEBI" id="CHEBI:58525"/>
        <dbReference type="EC" id="5.3.1.16"/>
    </reaction>
</comment>
<comment type="pathway">
    <text evidence="1">Amino-acid biosynthesis; L-histidine biosynthesis; L-histidine from 5-phospho-alpha-D-ribose 1-diphosphate: step 4/9.</text>
</comment>
<comment type="subcellular location">
    <subcellularLocation>
        <location evidence="1">Cytoplasm</location>
    </subcellularLocation>
</comment>
<comment type="similarity">
    <text evidence="1">Belongs to the HisA/HisF family.</text>
</comment>
<gene>
    <name evidence="1" type="primary">hisA</name>
    <name type="ordered locus">THEYE_A1955</name>
</gene>
<dbReference type="EC" id="5.3.1.16" evidence="1"/>
<dbReference type="EMBL" id="CP001147">
    <property type="protein sequence ID" value="ACI20427.1"/>
    <property type="molecule type" value="Genomic_DNA"/>
</dbReference>
<dbReference type="RefSeq" id="WP_012545163.1">
    <property type="nucleotide sequence ID" value="NC_011296.1"/>
</dbReference>
<dbReference type="RefSeq" id="YP_002249745.1">
    <property type="nucleotide sequence ID" value="NC_011296.1"/>
</dbReference>
<dbReference type="SMR" id="B5YIB4"/>
<dbReference type="FunCoup" id="B5YIB4">
    <property type="interactions" value="422"/>
</dbReference>
<dbReference type="STRING" id="289376.THEYE_A1955"/>
<dbReference type="EnsemblBacteria" id="ACI20427">
    <property type="protein sequence ID" value="ACI20427"/>
    <property type="gene ID" value="THEYE_A1955"/>
</dbReference>
<dbReference type="KEGG" id="tye:THEYE_A1955"/>
<dbReference type="PATRIC" id="fig|289376.4.peg.1910"/>
<dbReference type="eggNOG" id="COG0106">
    <property type="taxonomic scope" value="Bacteria"/>
</dbReference>
<dbReference type="HOGENOM" id="CLU_048577_1_1_0"/>
<dbReference type="InParanoid" id="B5YIB4"/>
<dbReference type="OrthoDB" id="9807749at2"/>
<dbReference type="UniPathway" id="UPA00031">
    <property type="reaction ID" value="UER00009"/>
</dbReference>
<dbReference type="Proteomes" id="UP000000718">
    <property type="component" value="Chromosome"/>
</dbReference>
<dbReference type="GO" id="GO:0005737">
    <property type="term" value="C:cytoplasm"/>
    <property type="evidence" value="ECO:0000318"/>
    <property type="project" value="GO_Central"/>
</dbReference>
<dbReference type="GO" id="GO:0003949">
    <property type="term" value="F:1-(5-phosphoribosyl)-5-[(5-phosphoribosylamino)methylideneamino]imidazole-4-carboxamide isomerase activity"/>
    <property type="evidence" value="ECO:0000318"/>
    <property type="project" value="GO_Central"/>
</dbReference>
<dbReference type="GO" id="GO:0000105">
    <property type="term" value="P:L-histidine biosynthetic process"/>
    <property type="evidence" value="ECO:0000318"/>
    <property type="project" value="GO_Central"/>
</dbReference>
<dbReference type="CDD" id="cd04732">
    <property type="entry name" value="HisA"/>
    <property type="match status" value="1"/>
</dbReference>
<dbReference type="FunFam" id="3.20.20.70:FF:000009">
    <property type="entry name" value="1-(5-phosphoribosyl)-5-[(5-phosphoribosylamino)methylideneamino] imidazole-4-carboxamide isomerase"/>
    <property type="match status" value="1"/>
</dbReference>
<dbReference type="Gene3D" id="3.20.20.70">
    <property type="entry name" value="Aldolase class I"/>
    <property type="match status" value="1"/>
</dbReference>
<dbReference type="HAMAP" id="MF_01014">
    <property type="entry name" value="HisA"/>
    <property type="match status" value="1"/>
</dbReference>
<dbReference type="InterPro" id="IPR013785">
    <property type="entry name" value="Aldolase_TIM"/>
</dbReference>
<dbReference type="InterPro" id="IPR006062">
    <property type="entry name" value="His_biosynth"/>
</dbReference>
<dbReference type="InterPro" id="IPR006063">
    <property type="entry name" value="HisA_bact_arch"/>
</dbReference>
<dbReference type="InterPro" id="IPR044524">
    <property type="entry name" value="Isoase_HisA-like"/>
</dbReference>
<dbReference type="InterPro" id="IPR023016">
    <property type="entry name" value="Isoase_HisA-like_bact"/>
</dbReference>
<dbReference type="InterPro" id="IPR011060">
    <property type="entry name" value="RibuloseP-bd_barrel"/>
</dbReference>
<dbReference type="NCBIfam" id="TIGR00007">
    <property type="entry name" value="1-(5-phosphoribosyl)-5-[(5-phosphoribosylamino)methylideneamino]imidazole-4-carboxamide isomerase"/>
    <property type="match status" value="1"/>
</dbReference>
<dbReference type="NCBIfam" id="NF010112">
    <property type="entry name" value="PRK13585.1"/>
    <property type="match status" value="1"/>
</dbReference>
<dbReference type="PANTHER" id="PTHR43090">
    <property type="entry name" value="1-(5-PHOSPHORIBOSYL)-5-[(5-PHOSPHORIBOSYLAMINO)METHYLIDENEAMINO] IMIDAZOLE-4-CARBOXAMIDE ISOMERASE"/>
    <property type="match status" value="1"/>
</dbReference>
<dbReference type="PANTHER" id="PTHR43090:SF2">
    <property type="entry name" value="1-(5-PHOSPHORIBOSYL)-5-[(5-PHOSPHORIBOSYLAMINO)METHYLIDENEAMINO] IMIDAZOLE-4-CARBOXAMIDE ISOMERASE"/>
    <property type="match status" value="1"/>
</dbReference>
<dbReference type="Pfam" id="PF00977">
    <property type="entry name" value="His_biosynth"/>
    <property type="match status" value="1"/>
</dbReference>
<dbReference type="SUPFAM" id="SSF51366">
    <property type="entry name" value="Ribulose-phoshate binding barrel"/>
    <property type="match status" value="1"/>
</dbReference>
<keyword id="KW-0028">Amino-acid biosynthesis</keyword>
<keyword id="KW-0963">Cytoplasm</keyword>
<keyword id="KW-0368">Histidine biosynthesis</keyword>
<keyword id="KW-0413">Isomerase</keyword>
<keyword id="KW-1185">Reference proteome</keyword>
<proteinExistence type="inferred from homology"/>
<protein>
    <recommendedName>
        <fullName evidence="1">1-(5-phosphoribosyl)-5-[(5-phosphoribosylamino)methylideneamino] imidazole-4-carboxamide isomerase</fullName>
        <ecNumber evidence="1">5.3.1.16</ecNumber>
    </recommendedName>
    <alternativeName>
        <fullName evidence="1">Phosphoribosylformimino-5-aminoimidazole carboxamide ribotide isomerase</fullName>
    </alternativeName>
</protein>
<accession>B5YIB4</accession>
<feature type="chain" id="PRO_1000190566" description="1-(5-phosphoribosyl)-5-[(5-phosphoribosylamino)methylideneamino] imidazole-4-carboxamide isomerase">
    <location>
        <begin position="1"/>
        <end position="244"/>
    </location>
</feature>
<feature type="active site" description="Proton acceptor" evidence="1">
    <location>
        <position position="8"/>
    </location>
</feature>
<feature type="active site" description="Proton donor" evidence="1">
    <location>
        <position position="129"/>
    </location>
</feature>
<sequence length="244" mass="26629">MQIIPAIDLKDGKCVRLRQGKFSEVTVYYDNPEDAALRWQNEGAEVLHVVDLDGAKEGKIGNLPSIKKIREAFRGNIEVGGGIRRIEDIELLLSVGIDRVIVGTIAVQSPDFVKEVCKRFPKKIIVGIDAKDGLVAVKGWVEVTEIRAIELALKMQDYGIWGIIYTDISRDGMLTGPNIEATKALVESVKVPVIASGGVSSIEDIRKLAEIPQLWGVITGKAIYSGAIDLKEALRIIKGDGVKK</sequence>
<evidence type="ECO:0000255" key="1">
    <source>
        <dbReference type="HAMAP-Rule" id="MF_01014"/>
    </source>
</evidence>
<organism>
    <name type="scientific">Thermodesulfovibrio yellowstonii (strain ATCC 51303 / DSM 11347 / YP87)</name>
    <dbReference type="NCBI Taxonomy" id="289376"/>
    <lineage>
        <taxon>Bacteria</taxon>
        <taxon>Pseudomonadati</taxon>
        <taxon>Nitrospirota</taxon>
        <taxon>Thermodesulfovibrionia</taxon>
        <taxon>Thermodesulfovibrionales</taxon>
        <taxon>Thermodesulfovibrionaceae</taxon>
        <taxon>Thermodesulfovibrio</taxon>
    </lineage>
</organism>
<name>HIS4_THEYD</name>